<evidence type="ECO:0000255" key="1">
    <source>
        <dbReference type="HAMAP-Rule" id="MF_00020"/>
    </source>
</evidence>
<dbReference type="EC" id="2.7.2.1" evidence="1"/>
<dbReference type="EMBL" id="CP000503">
    <property type="protein sequence ID" value="ABM24465.1"/>
    <property type="molecule type" value="Genomic_DNA"/>
</dbReference>
<dbReference type="RefSeq" id="WP_011788964.1">
    <property type="nucleotide sequence ID" value="NC_008750.1"/>
</dbReference>
<dbReference type="SMR" id="A1RIH0"/>
<dbReference type="GeneID" id="67443970"/>
<dbReference type="KEGG" id="shw:Sputw3181_1628"/>
<dbReference type="HOGENOM" id="CLU_020352_0_1_6"/>
<dbReference type="UniPathway" id="UPA00340">
    <property type="reaction ID" value="UER00458"/>
</dbReference>
<dbReference type="Proteomes" id="UP000002597">
    <property type="component" value="Chromosome"/>
</dbReference>
<dbReference type="GO" id="GO:0005829">
    <property type="term" value="C:cytosol"/>
    <property type="evidence" value="ECO:0007669"/>
    <property type="project" value="TreeGrafter"/>
</dbReference>
<dbReference type="GO" id="GO:0008776">
    <property type="term" value="F:acetate kinase activity"/>
    <property type="evidence" value="ECO:0007669"/>
    <property type="project" value="UniProtKB-UniRule"/>
</dbReference>
<dbReference type="GO" id="GO:0005524">
    <property type="term" value="F:ATP binding"/>
    <property type="evidence" value="ECO:0007669"/>
    <property type="project" value="UniProtKB-KW"/>
</dbReference>
<dbReference type="GO" id="GO:0000287">
    <property type="term" value="F:magnesium ion binding"/>
    <property type="evidence" value="ECO:0007669"/>
    <property type="project" value="UniProtKB-UniRule"/>
</dbReference>
<dbReference type="GO" id="GO:0006083">
    <property type="term" value="P:acetate metabolic process"/>
    <property type="evidence" value="ECO:0007669"/>
    <property type="project" value="TreeGrafter"/>
</dbReference>
<dbReference type="GO" id="GO:0006085">
    <property type="term" value="P:acetyl-CoA biosynthetic process"/>
    <property type="evidence" value="ECO:0007669"/>
    <property type="project" value="UniProtKB-UniRule"/>
</dbReference>
<dbReference type="CDD" id="cd24010">
    <property type="entry name" value="ASKHA_NBD_AcK_PK"/>
    <property type="match status" value="1"/>
</dbReference>
<dbReference type="FunFam" id="3.30.420.40:FF:000041">
    <property type="entry name" value="Acetate kinase"/>
    <property type="match status" value="1"/>
</dbReference>
<dbReference type="Gene3D" id="3.30.420.40">
    <property type="match status" value="2"/>
</dbReference>
<dbReference type="HAMAP" id="MF_00020">
    <property type="entry name" value="Acetate_kinase"/>
    <property type="match status" value="1"/>
</dbReference>
<dbReference type="InterPro" id="IPR004372">
    <property type="entry name" value="Ac/propionate_kinase"/>
</dbReference>
<dbReference type="InterPro" id="IPR000890">
    <property type="entry name" value="Aliphatic_acid_kin_short-chain"/>
</dbReference>
<dbReference type="InterPro" id="IPR023865">
    <property type="entry name" value="Aliphatic_acid_kinase_CS"/>
</dbReference>
<dbReference type="InterPro" id="IPR043129">
    <property type="entry name" value="ATPase_NBD"/>
</dbReference>
<dbReference type="NCBIfam" id="TIGR00016">
    <property type="entry name" value="ackA"/>
    <property type="match status" value="1"/>
</dbReference>
<dbReference type="PANTHER" id="PTHR21060">
    <property type="entry name" value="ACETATE KINASE"/>
    <property type="match status" value="1"/>
</dbReference>
<dbReference type="PANTHER" id="PTHR21060:SF21">
    <property type="entry name" value="ACETATE KINASE"/>
    <property type="match status" value="1"/>
</dbReference>
<dbReference type="Pfam" id="PF00871">
    <property type="entry name" value="Acetate_kinase"/>
    <property type="match status" value="1"/>
</dbReference>
<dbReference type="PIRSF" id="PIRSF000722">
    <property type="entry name" value="Acetate_prop_kin"/>
    <property type="match status" value="1"/>
</dbReference>
<dbReference type="PRINTS" id="PR00471">
    <property type="entry name" value="ACETATEKNASE"/>
</dbReference>
<dbReference type="SUPFAM" id="SSF53067">
    <property type="entry name" value="Actin-like ATPase domain"/>
    <property type="match status" value="2"/>
</dbReference>
<dbReference type="PROSITE" id="PS01075">
    <property type="entry name" value="ACETATE_KINASE_1"/>
    <property type="match status" value="1"/>
</dbReference>
<dbReference type="PROSITE" id="PS01076">
    <property type="entry name" value="ACETATE_KINASE_2"/>
    <property type="match status" value="1"/>
</dbReference>
<name>ACKA_SHESW</name>
<keyword id="KW-0067">ATP-binding</keyword>
<keyword id="KW-0963">Cytoplasm</keyword>
<keyword id="KW-0418">Kinase</keyword>
<keyword id="KW-0460">Magnesium</keyword>
<keyword id="KW-0479">Metal-binding</keyword>
<keyword id="KW-0547">Nucleotide-binding</keyword>
<keyword id="KW-0808">Transferase</keyword>
<comment type="function">
    <text evidence="1">Catalyzes the formation of acetyl phosphate from acetate and ATP. Can also catalyze the reverse reaction.</text>
</comment>
<comment type="catalytic activity">
    <reaction evidence="1">
        <text>acetate + ATP = acetyl phosphate + ADP</text>
        <dbReference type="Rhea" id="RHEA:11352"/>
        <dbReference type="ChEBI" id="CHEBI:22191"/>
        <dbReference type="ChEBI" id="CHEBI:30089"/>
        <dbReference type="ChEBI" id="CHEBI:30616"/>
        <dbReference type="ChEBI" id="CHEBI:456216"/>
        <dbReference type="EC" id="2.7.2.1"/>
    </reaction>
</comment>
<comment type="cofactor">
    <cofactor evidence="1">
        <name>Mg(2+)</name>
        <dbReference type="ChEBI" id="CHEBI:18420"/>
    </cofactor>
    <cofactor evidence="1">
        <name>Mn(2+)</name>
        <dbReference type="ChEBI" id="CHEBI:29035"/>
    </cofactor>
    <text evidence="1">Mg(2+). Can also accept Mn(2+).</text>
</comment>
<comment type="pathway">
    <text evidence="1">Metabolic intermediate biosynthesis; acetyl-CoA biosynthesis; acetyl-CoA from acetate: step 1/2.</text>
</comment>
<comment type="subunit">
    <text evidence="1">Homodimer.</text>
</comment>
<comment type="subcellular location">
    <subcellularLocation>
        <location evidence="1">Cytoplasm</location>
    </subcellularLocation>
</comment>
<comment type="similarity">
    <text evidence="1">Belongs to the acetokinase family.</text>
</comment>
<sequence length="400" mass="43562">MSNKLVLVLNCGSSSLKFAVIDAQTGDDQISGLAECFGLEDSRIKWKINGEKQEAALGAFTAHREAVEFIVNKILAGQPELAAQIQAVGHRIVHGGEKFTRSVIIDDSVIKGIEDCASLAPLHNPAHLIGIRAAMASFPKLPQVAVFDTAFHQSMPDRAYVYALPYKLYREHGIRRYGMHGTSHLFVSREAAKMLNKPLAETNVICAHLGNGASVTAVKGGKSVDTSMGLTPLEGLVMGTRCGDIDPSIIYHLVHQLGYTLEEVNNLMNKQSGLLGISELTNDCRGIEEGYADGHKGATLALEIFCYRLAKYIASYTVPLGRLDAVVFTGGIGENSDLIREKVLNLLEIFNFHVDSERNKAARFGKKGIITQDNSTVAMVIPTNEEWVIAEDSIKLINKE</sequence>
<gene>
    <name evidence="1" type="primary">ackA</name>
    <name type="ordered locus">Sputw3181_1628</name>
</gene>
<proteinExistence type="inferred from homology"/>
<reference key="1">
    <citation type="submission" date="2006-12" db="EMBL/GenBank/DDBJ databases">
        <title>Complete sequence of Shewanella sp. W3-18-1.</title>
        <authorList>
            <consortium name="US DOE Joint Genome Institute"/>
            <person name="Copeland A."/>
            <person name="Lucas S."/>
            <person name="Lapidus A."/>
            <person name="Barry K."/>
            <person name="Detter J.C."/>
            <person name="Glavina del Rio T."/>
            <person name="Hammon N."/>
            <person name="Israni S."/>
            <person name="Dalin E."/>
            <person name="Tice H."/>
            <person name="Pitluck S."/>
            <person name="Chain P."/>
            <person name="Malfatti S."/>
            <person name="Shin M."/>
            <person name="Vergez L."/>
            <person name="Schmutz J."/>
            <person name="Larimer F."/>
            <person name="Land M."/>
            <person name="Hauser L."/>
            <person name="Kyrpides N."/>
            <person name="Lykidis A."/>
            <person name="Tiedje J."/>
            <person name="Richardson P."/>
        </authorList>
    </citation>
    <scope>NUCLEOTIDE SEQUENCE [LARGE SCALE GENOMIC DNA]</scope>
    <source>
        <strain>W3-18-1</strain>
    </source>
</reference>
<feature type="chain" id="PRO_1000002260" description="Acetate kinase">
    <location>
        <begin position="1"/>
        <end position="400"/>
    </location>
</feature>
<feature type="active site" description="Proton donor/acceptor" evidence="1">
    <location>
        <position position="148"/>
    </location>
</feature>
<feature type="binding site" evidence="1">
    <location>
        <position position="10"/>
    </location>
    <ligand>
        <name>Mg(2+)</name>
        <dbReference type="ChEBI" id="CHEBI:18420"/>
    </ligand>
</feature>
<feature type="binding site" evidence="1">
    <location>
        <position position="17"/>
    </location>
    <ligand>
        <name>ATP</name>
        <dbReference type="ChEBI" id="CHEBI:30616"/>
    </ligand>
</feature>
<feature type="binding site" evidence="1">
    <location>
        <position position="91"/>
    </location>
    <ligand>
        <name>substrate</name>
    </ligand>
</feature>
<feature type="binding site" evidence="1">
    <location>
        <begin position="208"/>
        <end position="212"/>
    </location>
    <ligand>
        <name>ATP</name>
        <dbReference type="ChEBI" id="CHEBI:30616"/>
    </ligand>
</feature>
<feature type="binding site" evidence="1">
    <location>
        <begin position="283"/>
        <end position="285"/>
    </location>
    <ligand>
        <name>ATP</name>
        <dbReference type="ChEBI" id="CHEBI:30616"/>
    </ligand>
</feature>
<feature type="binding site" evidence="1">
    <location>
        <begin position="331"/>
        <end position="335"/>
    </location>
    <ligand>
        <name>ATP</name>
        <dbReference type="ChEBI" id="CHEBI:30616"/>
    </ligand>
</feature>
<feature type="binding site" evidence="1">
    <location>
        <position position="385"/>
    </location>
    <ligand>
        <name>Mg(2+)</name>
        <dbReference type="ChEBI" id="CHEBI:18420"/>
    </ligand>
</feature>
<feature type="site" description="Transition state stabilizer" evidence="1">
    <location>
        <position position="180"/>
    </location>
</feature>
<feature type="site" description="Transition state stabilizer" evidence="1">
    <location>
        <position position="241"/>
    </location>
</feature>
<accession>A1RIH0</accession>
<organism>
    <name type="scientific">Shewanella sp. (strain W3-18-1)</name>
    <dbReference type="NCBI Taxonomy" id="351745"/>
    <lineage>
        <taxon>Bacteria</taxon>
        <taxon>Pseudomonadati</taxon>
        <taxon>Pseudomonadota</taxon>
        <taxon>Gammaproteobacteria</taxon>
        <taxon>Alteromonadales</taxon>
        <taxon>Shewanellaceae</taxon>
        <taxon>Shewanella</taxon>
    </lineage>
</organism>
<protein>
    <recommendedName>
        <fullName evidence="1">Acetate kinase</fullName>
        <ecNumber evidence="1">2.7.2.1</ecNumber>
    </recommendedName>
    <alternativeName>
        <fullName evidence="1">Acetokinase</fullName>
    </alternativeName>
</protein>